<accession>P0A131</accession>
<accession>P43037</accession>
<dbReference type="EMBL" id="X74218">
    <property type="protein sequence ID" value="CAA52295.1"/>
    <property type="molecule type" value="Genomic_DNA"/>
</dbReference>
<dbReference type="SMR" id="P0A131"/>
<dbReference type="eggNOG" id="COG1729">
    <property type="taxonomic scope" value="Bacteria"/>
</dbReference>
<dbReference type="GO" id="GO:0030288">
    <property type="term" value="C:outer membrane-bounded periplasmic space"/>
    <property type="evidence" value="ECO:0007669"/>
    <property type="project" value="UniProtKB-UniRule"/>
</dbReference>
<dbReference type="GO" id="GO:0043093">
    <property type="term" value="P:FtsZ-dependent cytokinesis"/>
    <property type="evidence" value="ECO:0007669"/>
    <property type="project" value="UniProtKB-UniRule"/>
</dbReference>
<dbReference type="GO" id="GO:0070206">
    <property type="term" value="P:protein trimerization"/>
    <property type="evidence" value="ECO:0007669"/>
    <property type="project" value="InterPro"/>
</dbReference>
<dbReference type="Gene3D" id="1.20.5.110">
    <property type="match status" value="1"/>
</dbReference>
<dbReference type="Gene3D" id="1.25.40.10">
    <property type="entry name" value="Tetratricopeptide repeat domain"/>
    <property type="match status" value="1"/>
</dbReference>
<dbReference type="HAMAP" id="MF_02066">
    <property type="entry name" value="CpoB"/>
    <property type="match status" value="1"/>
</dbReference>
<dbReference type="InterPro" id="IPR034706">
    <property type="entry name" value="CpoB"/>
</dbReference>
<dbReference type="InterPro" id="IPR014162">
    <property type="entry name" value="CpoB_C"/>
</dbReference>
<dbReference type="InterPro" id="IPR018704">
    <property type="entry name" value="SecYEG/CpoB_TPR"/>
</dbReference>
<dbReference type="InterPro" id="IPR011990">
    <property type="entry name" value="TPR-like_helical_dom_sf"/>
</dbReference>
<dbReference type="InterPro" id="IPR032519">
    <property type="entry name" value="YbgF_tri"/>
</dbReference>
<dbReference type="NCBIfam" id="TIGR02795">
    <property type="entry name" value="tol_pal_ybgF"/>
    <property type="match status" value="1"/>
</dbReference>
<dbReference type="Pfam" id="PF16331">
    <property type="entry name" value="TolA_bind_tri"/>
    <property type="match status" value="1"/>
</dbReference>
<dbReference type="Pfam" id="PF09976">
    <property type="entry name" value="TPR_21"/>
    <property type="match status" value="1"/>
</dbReference>
<dbReference type="SUPFAM" id="SSF48452">
    <property type="entry name" value="TPR-like"/>
    <property type="match status" value="1"/>
</dbReference>
<dbReference type="PROSITE" id="PS50293">
    <property type="entry name" value="TPR_REGION"/>
    <property type="match status" value="1"/>
</dbReference>
<proteinExistence type="inferred from homology"/>
<feature type="signal peptide" evidence="2">
    <location>
        <begin position="1"/>
        <end position="21"/>
    </location>
</feature>
<feature type="chain" id="PRO_0000013806" description="Cell division coordinator CpoB">
    <location>
        <begin position="22"/>
        <end position="268"/>
    </location>
</feature>
<feature type="repeat" description="TPR 1" evidence="1">
    <location>
        <begin position="149"/>
        <end position="181"/>
    </location>
</feature>
<feature type="repeat" description="TPR 2" evidence="1">
    <location>
        <begin position="185"/>
        <end position="218"/>
    </location>
</feature>
<feature type="repeat" description="TPR 3" evidence="1">
    <location>
        <begin position="222"/>
        <end position="255"/>
    </location>
</feature>
<feature type="region of interest" description="Disordered" evidence="4">
    <location>
        <begin position="104"/>
        <end position="146"/>
    </location>
</feature>
<feature type="coiled-coil region" evidence="3">
    <location>
        <begin position="58"/>
        <end position="94"/>
    </location>
</feature>
<feature type="compositionally biased region" description="Low complexity" evidence="4">
    <location>
        <begin position="121"/>
        <end position="143"/>
    </location>
</feature>
<keyword id="KW-0131">Cell cycle</keyword>
<keyword id="KW-0132">Cell division</keyword>
<keyword id="KW-0175">Coiled coil</keyword>
<keyword id="KW-0574">Periplasm</keyword>
<keyword id="KW-0677">Repeat</keyword>
<keyword id="KW-0732">Signal</keyword>
<keyword id="KW-0802">TPR repeat</keyword>
<comment type="function">
    <text evidence="3">Mediates coordination of peptidoglycan synthesis and outer membrane constriction during cell division.</text>
</comment>
<comment type="subcellular location">
    <subcellularLocation>
        <location evidence="3">Periplasm</location>
    </subcellularLocation>
</comment>
<comment type="domain">
    <text evidence="1">Contains an N-terminal coiled-coil domain and a C-terminal TPR domain, separated by a flexible linker.</text>
</comment>
<comment type="similarity">
    <text evidence="3">Belongs to the CpoB family.</text>
</comment>
<gene>
    <name evidence="3" type="primary">cpoB</name>
</gene>
<protein>
    <recommendedName>
        <fullName evidence="3">Cell division coordinator CpoB</fullName>
    </recommendedName>
    <alternativeName>
        <fullName>ORF2</fullName>
    </alternativeName>
</protein>
<evidence type="ECO:0000250" key="1">
    <source>
        <dbReference type="UniProtKB" id="P45955"/>
    </source>
</evidence>
<evidence type="ECO:0000255" key="2"/>
<evidence type="ECO:0000255" key="3">
    <source>
        <dbReference type="HAMAP-Rule" id="MF_02066"/>
    </source>
</evidence>
<evidence type="ECO:0000256" key="4">
    <source>
        <dbReference type="SAM" id="MobiDB-lite"/>
    </source>
</evidence>
<reference key="1">
    <citation type="journal article" date="1996" name="J. Bacteriol.">
        <title>The Pseudomonas putida peptidoglycan-associated outer membrane lipoprotein is involved in maintenance of the integrity of the cell cell envelope.</title>
        <authorList>
            <person name="Rodriguez-Herva J.J."/>
            <person name="Ramos-Gonzalez M.I."/>
            <person name="Ramos J.L."/>
        </authorList>
    </citation>
    <scope>NUCLEOTIDE SEQUENCE [GENOMIC DNA]</scope>
    <source>
        <strain>ATCC 33015 / DSM 3931 / JCM 6156 / NCIMB 12182 / mt-2</strain>
    </source>
</reference>
<name>CPOB_PSEPU</name>
<sequence>MRMCRRVVTVLALSLPLAAWAEVPVVDDNAGSYPPAGYGTSGAYAGSGASAPASAQGQLFMQLQQMQDQLSRQQGIIEELQNDVSRMKQENLERYQDLDRRINSGAAPAATPDNSSGGGASNAAPDAAAGAAAQQPAGSSQPGDPAKEKLYYDAAFDLIKQKDFDKASQAFNAFLRKYPNSQYAGNAQYWLGEVNLAKGDLQGASQAFAQVSQKYPKHSKVPDSLYKLADVERRMGHTDKVKGILQQVVTQYPGTSAAQLAQRDLQKL</sequence>
<organism>
    <name type="scientific">Pseudomonas putida</name>
    <name type="common">Arthrobacter siderocapsulatus</name>
    <dbReference type="NCBI Taxonomy" id="303"/>
    <lineage>
        <taxon>Bacteria</taxon>
        <taxon>Pseudomonadati</taxon>
        <taxon>Pseudomonadota</taxon>
        <taxon>Gammaproteobacteria</taxon>
        <taxon>Pseudomonadales</taxon>
        <taxon>Pseudomonadaceae</taxon>
        <taxon>Pseudomonas</taxon>
    </lineage>
</organism>